<proteinExistence type="inferred from homology"/>
<reference key="1">
    <citation type="journal article" date="2005" name="Nucleic Acids Res.">
        <title>Genomic blueprint of Hahella chejuensis, a marine microbe producing an algicidal agent.</title>
        <authorList>
            <person name="Jeong H."/>
            <person name="Yim J.H."/>
            <person name="Lee C."/>
            <person name="Choi S.-H."/>
            <person name="Park Y.K."/>
            <person name="Yoon S.H."/>
            <person name="Hur C.-G."/>
            <person name="Kang H.-Y."/>
            <person name="Kim D."/>
            <person name="Lee H.H."/>
            <person name="Park K.H."/>
            <person name="Park S.-H."/>
            <person name="Park H.-S."/>
            <person name="Lee H.K."/>
            <person name="Oh T.K."/>
            <person name="Kim J.F."/>
        </authorList>
    </citation>
    <scope>NUCLEOTIDE SEQUENCE [LARGE SCALE GENOMIC DNA]</scope>
    <source>
        <strain>KCTC 2396</strain>
    </source>
</reference>
<organism>
    <name type="scientific">Hahella chejuensis (strain KCTC 2396)</name>
    <dbReference type="NCBI Taxonomy" id="349521"/>
    <lineage>
        <taxon>Bacteria</taxon>
        <taxon>Pseudomonadati</taxon>
        <taxon>Pseudomonadota</taxon>
        <taxon>Gammaproteobacteria</taxon>
        <taxon>Oceanospirillales</taxon>
        <taxon>Hahellaceae</taxon>
        <taxon>Hahella</taxon>
    </lineage>
</organism>
<protein>
    <recommendedName>
        <fullName evidence="1">Small ribosomal subunit protein uS5</fullName>
    </recommendedName>
    <alternativeName>
        <fullName evidence="2">30S ribosomal protein S5</fullName>
    </alternativeName>
</protein>
<name>RS5_HAHCH</name>
<evidence type="ECO:0000255" key="1">
    <source>
        <dbReference type="HAMAP-Rule" id="MF_01307"/>
    </source>
</evidence>
<evidence type="ECO:0000305" key="2"/>
<dbReference type="EMBL" id="CP000155">
    <property type="protein sequence ID" value="ABC32845.1"/>
    <property type="molecule type" value="Genomic_DNA"/>
</dbReference>
<dbReference type="RefSeq" id="WP_011399903.1">
    <property type="nucleotide sequence ID" value="NC_007645.1"/>
</dbReference>
<dbReference type="SMR" id="Q2S929"/>
<dbReference type="STRING" id="349521.HCH_06199"/>
<dbReference type="KEGG" id="hch:HCH_06199"/>
<dbReference type="eggNOG" id="COG0098">
    <property type="taxonomic scope" value="Bacteria"/>
</dbReference>
<dbReference type="HOGENOM" id="CLU_065898_2_2_6"/>
<dbReference type="OrthoDB" id="9809045at2"/>
<dbReference type="Proteomes" id="UP000000238">
    <property type="component" value="Chromosome"/>
</dbReference>
<dbReference type="GO" id="GO:0015935">
    <property type="term" value="C:small ribosomal subunit"/>
    <property type="evidence" value="ECO:0007669"/>
    <property type="project" value="InterPro"/>
</dbReference>
<dbReference type="GO" id="GO:0019843">
    <property type="term" value="F:rRNA binding"/>
    <property type="evidence" value="ECO:0007669"/>
    <property type="project" value="UniProtKB-UniRule"/>
</dbReference>
<dbReference type="GO" id="GO:0003735">
    <property type="term" value="F:structural constituent of ribosome"/>
    <property type="evidence" value="ECO:0007669"/>
    <property type="project" value="InterPro"/>
</dbReference>
<dbReference type="GO" id="GO:0006412">
    <property type="term" value="P:translation"/>
    <property type="evidence" value="ECO:0007669"/>
    <property type="project" value="UniProtKB-UniRule"/>
</dbReference>
<dbReference type="FunFam" id="3.30.160.20:FF:000001">
    <property type="entry name" value="30S ribosomal protein S5"/>
    <property type="match status" value="1"/>
</dbReference>
<dbReference type="FunFam" id="3.30.230.10:FF:000002">
    <property type="entry name" value="30S ribosomal protein S5"/>
    <property type="match status" value="1"/>
</dbReference>
<dbReference type="Gene3D" id="3.30.160.20">
    <property type="match status" value="1"/>
</dbReference>
<dbReference type="Gene3D" id="3.30.230.10">
    <property type="match status" value="1"/>
</dbReference>
<dbReference type="HAMAP" id="MF_01307_B">
    <property type="entry name" value="Ribosomal_uS5_B"/>
    <property type="match status" value="1"/>
</dbReference>
<dbReference type="InterPro" id="IPR020568">
    <property type="entry name" value="Ribosomal_Su5_D2-typ_SF"/>
</dbReference>
<dbReference type="InterPro" id="IPR000851">
    <property type="entry name" value="Ribosomal_uS5"/>
</dbReference>
<dbReference type="InterPro" id="IPR005712">
    <property type="entry name" value="Ribosomal_uS5_bac-type"/>
</dbReference>
<dbReference type="InterPro" id="IPR005324">
    <property type="entry name" value="Ribosomal_uS5_C"/>
</dbReference>
<dbReference type="InterPro" id="IPR013810">
    <property type="entry name" value="Ribosomal_uS5_N"/>
</dbReference>
<dbReference type="InterPro" id="IPR018192">
    <property type="entry name" value="Ribosomal_uS5_N_CS"/>
</dbReference>
<dbReference type="InterPro" id="IPR014721">
    <property type="entry name" value="Ribsml_uS5_D2-typ_fold_subgr"/>
</dbReference>
<dbReference type="NCBIfam" id="TIGR01021">
    <property type="entry name" value="rpsE_bact"/>
    <property type="match status" value="1"/>
</dbReference>
<dbReference type="PANTHER" id="PTHR48432">
    <property type="entry name" value="S5 DRBM DOMAIN-CONTAINING PROTEIN"/>
    <property type="match status" value="1"/>
</dbReference>
<dbReference type="PANTHER" id="PTHR48432:SF1">
    <property type="entry name" value="S5 DRBM DOMAIN-CONTAINING PROTEIN"/>
    <property type="match status" value="1"/>
</dbReference>
<dbReference type="Pfam" id="PF00333">
    <property type="entry name" value="Ribosomal_S5"/>
    <property type="match status" value="1"/>
</dbReference>
<dbReference type="Pfam" id="PF03719">
    <property type="entry name" value="Ribosomal_S5_C"/>
    <property type="match status" value="1"/>
</dbReference>
<dbReference type="SUPFAM" id="SSF54768">
    <property type="entry name" value="dsRNA-binding domain-like"/>
    <property type="match status" value="1"/>
</dbReference>
<dbReference type="SUPFAM" id="SSF54211">
    <property type="entry name" value="Ribosomal protein S5 domain 2-like"/>
    <property type="match status" value="1"/>
</dbReference>
<dbReference type="PROSITE" id="PS00585">
    <property type="entry name" value="RIBOSOMAL_S5"/>
    <property type="match status" value="1"/>
</dbReference>
<dbReference type="PROSITE" id="PS50881">
    <property type="entry name" value="S5_DSRBD"/>
    <property type="match status" value="1"/>
</dbReference>
<sequence>MTNNEQQKGAELQEKLVQVNRVAKVVKGGRIFGFTALTVVGDGNGKVGFGRGKAREVPVAIQKAMDAARKNMITVTLNGNTLQYPVKARHGSAKVFMQPASEGTGIIAGGAMRAVLEVAGVQNVLAKCYGSTNPVNVVRATFEGLKAMQAPEEIAAKRGKTVEEILG</sequence>
<gene>
    <name evidence="1" type="primary">rpsE</name>
    <name type="ordered locus">HCH_06199</name>
</gene>
<feature type="chain" id="PRO_0000323132" description="Small ribosomal subunit protein uS5">
    <location>
        <begin position="1"/>
        <end position="167"/>
    </location>
</feature>
<feature type="domain" description="S5 DRBM" evidence="1">
    <location>
        <begin position="12"/>
        <end position="75"/>
    </location>
</feature>
<accession>Q2S929</accession>
<keyword id="KW-1185">Reference proteome</keyword>
<keyword id="KW-0687">Ribonucleoprotein</keyword>
<keyword id="KW-0689">Ribosomal protein</keyword>
<keyword id="KW-0694">RNA-binding</keyword>
<keyword id="KW-0699">rRNA-binding</keyword>
<comment type="function">
    <text evidence="1">With S4 and S12 plays an important role in translational accuracy.</text>
</comment>
<comment type="function">
    <text evidence="1">Located at the back of the 30S subunit body where it stabilizes the conformation of the head with respect to the body.</text>
</comment>
<comment type="subunit">
    <text evidence="1">Part of the 30S ribosomal subunit. Contacts proteins S4 and S8.</text>
</comment>
<comment type="domain">
    <text>The N-terminal domain interacts with the head of the 30S subunit; the C-terminal domain interacts with the body and contacts protein S4. The interaction surface between S4 and S5 is involved in control of translational fidelity.</text>
</comment>
<comment type="similarity">
    <text evidence="1">Belongs to the universal ribosomal protein uS5 family.</text>
</comment>